<dbReference type="EMBL" id="AF143296">
    <property type="protein sequence ID" value="AAD33899.1"/>
    <property type="molecule type" value="mRNA"/>
</dbReference>
<dbReference type="SMR" id="Q9W6N4"/>
<dbReference type="GO" id="GO:0090575">
    <property type="term" value="C:RNA polymerase II transcription regulator complex"/>
    <property type="evidence" value="ECO:0007669"/>
    <property type="project" value="TreeGrafter"/>
</dbReference>
<dbReference type="GO" id="GO:0004879">
    <property type="term" value="F:nuclear receptor activity"/>
    <property type="evidence" value="ECO:0000250"/>
    <property type="project" value="UniProtKB"/>
</dbReference>
<dbReference type="GO" id="GO:0000978">
    <property type="term" value="F:RNA polymerase II cis-regulatory region sequence-specific DNA binding"/>
    <property type="evidence" value="ECO:0007669"/>
    <property type="project" value="TreeGrafter"/>
</dbReference>
<dbReference type="GO" id="GO:0070324">
    <property type="term" value="F:thyroid hormone binding"/>
    <property type="evidence" value="ECO:0000250"/>
    <property type="project" value="UniProtKB"/>
</dbReference>
<dbReference type="GO" id="GO:0008270">
    <property type="term" value="F:zinc ion binding"/>
    <property type="evidence" value="ECO:0007669"/>
    <property type="project" value="UniProtKB-KW"/>
</dbReference>
<dbReference type="GO" id="GO:0030154">
    <property type="term" value="P:cell differentiation"/>
    <property type="evidence" value="ECO:0007669"/>
    <property type="project" value="TreeGrafter"/>
</dbReference>
<dbReference type="GO" id="GO:0000122">
    <property type="term" value="P:negative regulation of transcription by RNA polymerase II"/>
    <property type="evidence" value="ECO:0007669"/>
    <property type="project" value="TreeGrafter"/>
</dbReference>
<dbReference type="GO" id="GO:0045944">
    <property type="term" value="P:positive regulation of transcription by RNA polymerase II"/>
    <property type="evidence" value="ECO:0007669"/>
    <property type="project" value="TreeGrafter"/>
</dbReference>
<dbReference type="GO" id="GO:0048384">
    <property type="term" value="P:retinoic acid receptor signaling pathway"/>
    <property type="evidence" value="ECO:0007669"/>
    <property type="project" value="TreeGrafter"/>
</dbReference>
<dbReference type="GO" id="GO:0002154">
    <property type="term" value="P:thyroid hormone receptor signaling pathway"/>
    <property type="evidence" value="ECO:0007669"/>
    <property type="project" value="TreeGrafter"/>
</dbReference>
<dbReference type="CDD" id="cd06961">
    <property type="entry name" value="NR_DBD_TR"/>
    <property type="match status" value="1"/>
</dbReference>
<dbReference type="CDD" id="cd06935">
    <property type="entry name" value="NR_LBD_TR"/>
    <property type="match status" value="1"/>
</dbReference>
<dbReference type="FunFam" id="1.10.565.10:FF:000006">
    <property type="entry name" value="Thyroid hormone receptor beta 2"/>
    <property type="match status" value="1"/>
</dbReference>
<dbReference type="FunFam" id="3.30.50.10:FF:000011">
    <property type="entry name" value="Thyroid hormone receptor beta isoform"/>
    <property type="match status" value="1"/>
</dbReference>
<dbReference type="Gene3D" id="3.30.50.10">
    <property type="entry name" value="Erythroid Transcription Factor GATA-1, subunit A"/>
    <property type="match status" value="1"/>
</dbReference>
<dbReference type="Gene3D" id="1.10.565.10">
    <property type="entry name" value="Retinoid X Receptor"/>
    <property type="match status" value="1"/>
</dbReference>
<dbReference type="InterPro" id="IPR035500">
    <property type="entry name" value="NHR-like_dom_sf"/>
</dbReference>
<dbReference type="InterPro" id="IPR000536">
    <property type="entry name" value="Nucl_hrmn_rcpt_lig-bd"/>
</dbReference>
<dbReference type="InterPro" id="IPR050234">
    <property type="entry name" value="Nuclear_hormone_rcpt_NR1"/>
</dbReference>
<dbReference type="InterPro" id="IPR001723">
    <property type="entry name" value="Nuclear_hrmn_rcpt"/>
</dbReference>
<dbReference type="InterPro" id="IPR001728">
    <property type="entry name" value="ThyrH_rcpt"/>
</dbReference>
<dbReference type="InterPro" id="IPR001628">
    <property type="entry name" value="Znf_hrmn_rcpt"/>
</dbReference>
<dbReference type="InterPro" id="IPR013088">
    <property type="entry name" value="Znf_NHR/GATA"/>
</dbReference>
<dbReference type="PANTHER" id="PTHR24082">
    <property type="entry name" value="NUCLEAR HORMONE RECEPTOR"/>
    <property type="match status" value="1"/>
</dbReference>
<dbReference type="PANTHER" id="PTHR24082:SF42">
    <property type="entry name" value="THYROID HORMONE RECEPTOR ALPHA"/>
    <property type="match status" value="1"/>
</dbReference>
<dbReference type="Pfam" id="PF00104">
    <property type="entry name" value="Hormone_recep"/>
    <property type="match status" value="1"/>
</dbReference>
<dbReference type="Pfam" id="PF00105">
    <property type="entry name" value="zf-C4"/>
    <property type="match status" value="1"/>
</dbReference>
<dbReference type="PRINTS" id="PR00398">
    <property type="entry name" value="STRDHORMONER"/>
</dbReference>
<dbReference type="PRINTS" id="PR00047">
    <property type="entry name" value="STROIDFINGER"/>
</dbReference>
<dbReference type="PRINTS" id="PR00546">
    <property type="entry name" value="THYROIDHORMR"/>
</dbReference>
<dbReference type="SMART" id="SM00430">
    <property type="entry name" value="HOLI"/>
    <property type="match status" value="1"/>
</dbReference>
<dbReference type="SMART" id="SM00399">
    <property type="entry name" value="ZnF_C4"/>
    <property type="match status" value="1"/>
</dbReference>
<dbReference type="SUPFAM" id="SSF57716">
    <property type="entry name" value="Glucocorticoid receptor-like (DNA-binding domain)"/>
    <property type="match status" value="1"/>
</dbReference>
<dbReference type="SUPFAM" id="SSF48508">
    <property type="entry name" value="Nuclear receptor ligand-binding domain"/>
    <property type="match status" value="1"/>
</dbReference>
<dbReference type="PROSITE" id="PS51843">
    <property type="entry name" value="NR_LBD"/>
    <property type="match status" value="1"/>
</dbReference>
<dbReference type="PROSITE" id="PS00031">
    <property type="entry name" value="NUCLEAR_REC_DBD_1"/>
    <property type="match status" value="1"/>
</dbReference>
<dbReference type="PROSITE" id="PS51030">
    <property type="entry name" value="NUCLEAR_REC_DBD_2"/>
    <property type="match status" value="1"/>
</dbReference>
<proteinExistence type="evidence at transcript level"/>
<feature type="chain" id="PRO_0000053434" description="Thyroid hormone receptor alpha">
    <location>
        <begin position="1"/>
        <end position="416"/>
    </location>
</feature>
<feature type="domain" description="NR LBD" evidence="4">
    <location>
        <begin position="169"/>
        <end position="413"/>
    </location>
</feature>
<feature type="DNA-binding region" description="Nuclear receptor" evidence="3">
    <location>
        <begin position="59"/>
        <end position="133"/>
    </location>
</feature>
<feature type="zinc finger region" description="NR C4-type" evidence="3">
    <location>
        <begin position="59"/>
        <end position="79"/>
    </location>
</feature>
<feature type="zinc finger region" description="NR C4-type" evidence="3">
    <location>
        <begin position="97"/>
        <end position="121"/>
    </location>
</feature>
<feature type="region of interest" description="Modulating">
    <location>
        <begin position="1"/>
        <end position="58"/>
    </location>
</feature>
<feature type="region of interest" description="Disordered" evidence="5">
    <location>
        <begin position="1"/>
        <end position="37"/>
    </location>
</feature>
<feature type="compositionally biased region" description="Polar residues" evidence="5">
    <location>
        <begin position="1"/>
        <end position="13"/>
    </location>
</feature>
<feature type="compositionally biased region" description="Basic and acidic residues" evidence="5">
    <location>
        <begin position="15"/>
        <end position="24"/>
    </location>
</feature>
<feature type="binding site" evidence="2">
    <location>
        <position position="59"/>
    </location>
    <ligand>
        <name>Zn(2+)</name>
        <dbReference type="ChEBI" id="CHEBI:29105"/>
        <label>1</label>
    </ligand>
</feature>
<feature type="binding site" evidence="2">
    <location>
        <position position="62"/>
    </location>
    <ligand>
        <name>Zn(2+)</name>
        <dbReference type="ChEBI" id="CHEBI:29105"/>
        <label>1</label>
    </ligand>
</feature>
<feature type="binding site" evidence="2">
    <location>
        <position position="76"/>
    </location>
    <ligand>
        <name>Zn(2+)</name>
        <dbReference type="ChEBI" id="CHEBI:29105"/>
        <label>1</label>
    </ligand>
</feature>
<feature type="binding site" evidence="2">
    <location>
        <position position="79"/>
    </location>
    <ligand>
        <name>Zn(2+)</name>
        <dbReference type="ChEBI" id="CHEBI:29105"/>
        <label>1</label>
    </ligand>
</feature>
<feature type="binding site" evidence="2">
    <location>
        <position position="97"/>
    </location>
    <ligand>
        <name>Zn(2+)</name>
        <dbReference type="ChEBI" id="CHEBI:29105"/>
        <label>2</label>
    </ligand>
</feature>
<feature type="binding site" evidence="2">
    <location>
        <position position="103"/>
    </location>
    <ligand>
        <name>Zn(2+)</name>
        <dbReference type="ChEBI" id="CHEBI:29105"/>
        <label>2</label>
    </ligand>
</feature>
<feature type="binding site" evidence="2">
    <location>
        <position position="113"/>
    </location>
    <ligand>
        <name>Zn(2+)</name>
        <dbReference type="ChEBI" id="CHEBI:29105"/>
        <label>2</label>
    </ligand>
</feature>
<feature type="binding site" evidence="2">
    <location>
        <position position="116"/>
    </location>
    <ligand>
        <name>Zn(2+)</name>
        <dbReference type="ChEBI" id="CHEBI:29105"/>
        <label>2</label>
    </ligand>
</feature>
<feature type="binding site" evidence="1">
    <location>
        <position position="234"/>
    </location>
    <ligand>
        <name>3,3',5-triiodo-L-thyronine</name>
        <dbReference type="ChEBI" id="CHEBI:533015"/>
    </ligand>
</feature>
<sequence>MEPMSNKQDSNSSEGDEKGWPDVPKRKRKNSQCSMKSMSALSVSVPGYIPSYLEKDEPCVVCGDKATGYHYRCITCEGCKGFFRRTIQKNLHPAYSCKYEGCCIIDKITRNQCQLCRFKKCISVGMAMDLVLDDSKRVAKRRLIEENREKRKREEMVRTLQVRPEPDTAEWELIRMATDAHRHTNAQGSSWKQKRKFLSDDIGQGPMVPTSDGDKVDLEAFSEFTKIMTPAITRVVDFAKKLPMFSELPCEDQIILLKGCCMEIMSLRAAVRYDPESETLTLNGEMAVKREQLKNGGLGVVSDAIFDLGKSLAQFNLDDTEVALMQAVLLMSSDRSGLTSLEKIEQCQEAYLLAFEHYINYRKHNIPHFWPKLLMKVTDLRMIGACHASRFLHMKVECSSELFPPLFLEVFEDQEV</sequence>
<evidence type="ECO:0000250" key="1">
    <source>
        <dbReference type="UniProtKB" id="P10827"/>
    </source>
</evidence>
<evidence type="ECO:0000250" key="2">
    <source>
        <dbReference type="UniProtKB" id="P10828"/>
    </source>
</evidence>
<evidence type="ECO:0000255" key="3">
    <source>
        <dbReference type="PROSITE-ProRule" id="PRU00407"/>
    </source>
</evidence>
<evidence type="ECO:0000255" key="4">
    <source>
        <dbReference type="PROSITE-ProRule" id="PRU01189"/>
    </source>
</evidence>
<evidence type="ECO:0000256" key="5">
    <source>
        <dbReference type="SAM" id="MobiDB-lite"/>
    </source>
</evidence>
<evidence type="ECO:0000305" key="6"/>
<comment type="function">
    <text>Nuclear hormone receptor that can act as a repressor or activator of transcription. High affinity receptor for thyroid hormones, including triiodothyronine and thyroxine.</text>
</comment>
<comment type="subcellular location">
    <subcellularLocation>
        <location>Nucleus</location>
    </subcellularLocation>
</comment>
<comment type="domain">
    <text>Composed of three domains: a modulating N-terminal domain, a DNA-binding domain and a C-terminal ligand-binding domain.</text>
</comment>
<comment type="similarity">
    <text evidence="6">Belongs to the nuclear hormone receptor family. NR1 subfamily.</text>
</comment>
<accession>Q9W6N4</accession>
<organism>
    <name type="scientific">Hippoglossus hippoglossus</name>
    <name type="common">Atlantic halibut</name>
    <name type="synonym">Pleuronectes hippoglossus</name>
    <dbReference type="NCBI Taxonomy" id="8267"/>
    <lineage>
        <taxon>Eukaryota</taxon>
        <taxon>Metazoa</taxon>
        <taxon>Chordata</taxon>
        <taxon>Craniata</taxon>
        <taxon>Vertebrata</taxon>
        <taxon>Euteleostomi</taxon>
        <taxon>Actinopterygii</taxon>
        <taxon>Neopterygii</taxon>
        <taxon>Teleostei</taxon>
        <taxon>Neoteleostei</taxon>
        <taxon>Acanthomorphata</taxon>
        <taxon>Carangaria</taxon>
        <taxon>Pleuronectiformes</taxon>
        <taxon>Pleuronectoidei</taxon>
        <taxon>Pleuronectidae</taxon>
        <taxon>Hippoglossus</taxon>
    </lineage>
</organism>
<name>THA_HIPHI</name>
<keyword id="KW-0238">DNA-binding</keyword>
<keyword id="KW-0479">Metal-binding</keyword>
<keyword id="KW-0539">Nucleus</keyword>
<keyword id="KW-0675">Receptor</keyword>
<keyword id="KW-0804">Transcription</keyword>
<keyword id="KW-0805">Transcription regulation</keyword>
<keyword id="KW-0862">Zinc</keyword>
<keyword id="KW-0863">Zinc-finger</keyword>
<protein>
    <recommendedName>
        <fullName>Thyroid hormone receptor alpha</fullName>
    </recommendedName>
    <alternativeName>
        <fullName>Nuclear receptor subfamily 1 group A member 1</fullName>
    </alternativeName>
</protein>
<gene>
    <name type="primary">thra</name>
    <name type="synonym">nr1a1</name>
</gene>
<reference key="1">
    <citation type="submission" date="1999-04" db="EMBL/GenBank/DDBJ databases">
        <title>Molecular cloning and developmental expression of the halibut thyroid hormone receptor-alpha.</title>
        <authorList>
            <person name="Llewellyn L."/>
            <person name="Nowell M.A."/>
            <person name="Ramsurn V.P."/>
            <person name="Wigham T."/>
            <person name="Sweeney G.E."/>
            <person name="Kristjansson B."/>
            <person name="Halldorsson O."/>
        </authorList>
    </citation>
    <scope>NUCLEOTIDE SEQUENCE [MRNA]</scope>
</reference>